<comment type="function">
    <text evidence="1">Part of the ABC transporter complex RbsABC involved in ribose import. Responsible for energy coupling to the transport system.</text>
</comment>
<comment type="catalytic activity">
    <reaction evidence="1">
        <text>D-ribose(out) + ATP + H2O = D-ribose(in) + ADP + phosphate + H(+)</text>
        <dbReference type="Rhea" id="RHEA:29903"/>
        <dbReference type="ChEBI" id="CHEBI:15377"/>
        <dbReference type="ChEBI" id="CHEBI:15378"/>
        <dbReference type="ChEBI" id="CHEBI:30616"/>
        <dbReference type="ChEBI" id="CHEBI:43474"/>
        <dbReference type="ChEBI" id="CHEBI:47013"/>
        <dbReference type="ChEBI" id="CHEBI:456216"/>
        <dbReference type="EC" id="7.5.2.7"/>
    </reaction>
</comment>
<comment type="subunit">
    <text evidence="1">The complex is composed of an ATP-binding protein (RbsA), two transmembrane proteins (RbsC) and a solute-binding protein (RbsB).</text>
</comment>
<comment type="subcellular location">
    <subcellularLocation>
        <location evidence="1">Cell inner membrane</location>
        <topology evidence="1">Peripheral membrane protein</topology>
    </subcellularLocation>
</comment>
<comment type="similarity">
    <text evidence="1">Belongs to the ABC transporter superfamily. Ribose importer (TC 3.A.1.2.1) family.</text>
</comment>
<proteinExistence type="inferred from homology"/>
<keyword id="KW-0067">ATP-binding</keyword>
<keyword id="KW-0997">Cell inner membrane</keyword>
<keyword id="KW-1003">Cell membrane</keyword>
<keyword id="KW-0472">Membrane</keyword>
<keyword id="KW-0547">Nucleotide-binding</keyword>
<keyword id="KW-1185">Reference proteome</keyword>
<keyword id="KW-0677">Repeat</keyword>
<keyword id="KW-0762">Sugar transport</keyword>
<keyword id="KW-1278">Translocase</keyword>
<keyword id="KW-0813">Transport</keyword>
<accession>Q9KN37</accession>
<dbReference type="EC" id="7.5.2.7" evidence="1"/>
<dbReference type="EMBL" id="AE003853">
    <property type="protein sequence ID" value="AAF96042.1"/>
    <property type="molecule type" value="Genomic_DNA"/>
</dbReference>
<dbReference type="PIR" id="A82497">
    <property type="entry name" value="A82497"/>
</dbReference>
<dbReference type="RefSeq" id="NP_232529.1">
    <property type="nucleotide sequence ID" value="NC_002506.1"/>
</dbReference>
<dbReference type="RefSeq" id="WP_000189455.1">
    <property type="nucleotide sequence ID" value="NZ_LT906615.1"/>
</dbReference>
<dbReference type="SMR" id="Q9KN37"/>
<dbReference type="STRING" id="243277.VC_A0128"/>
<dbReference type="DNASU" id="2612792"/>
<dbReference type="EnsemblBacteria" id="AAF96042">
    <property type="protein sequence ID" value="AAF96042"/>
    <property type="gene ID" value="VC_A0128"/>
</dbReference>
<dbReference type="GeneID" id="94016085"/>
<dbReference type="KEGG" id="vch:VC_A0128"/>
<dbReference type="PATRIC" id="fig|243277.26.peg.2767"/>
<dbReference type="eggNOG" id="COG1129">
    <property type="taxonomic scope" value="Bacteria"/>
</dbReference>
<dbReference type="HOGENOM" id="CLU_000604_92_2_6"/>
<dbReference type="Proteomes" id="UP000000584">
    <property type="component" value="Chromosome 2"/>
</dbReference>
<dbReference type="GO" id="GO:0005886">
    <property type="term" value="C:plasma membrane"/>
    <property type="evidence" value="ECO:0007669"/>
    <property type="project" value="UniProtKB-SubCell"/>
</dbReference>
<dbReference type="GO" id="GO:0015611">
    <property type="term" value="F:ABC-type D-ribose transporter activity"/>
    <property type="evidence" value="ECO:0007669"/>
    <property type="project" value="UniProtKB-EC"/>
</dbReference>
<dbReference type="GO" id="GO:0005524">
    <property type="term" value="F:ATP binding"/>
    <property type="evidence" value="ECO:0007669"/>
    <property type="project" value="UniProtKB-KW"/>
</dbReference>
<dbReference type="GO" id="GO:0016887">
    <property type="term" value="F:ATP hydrolysis activity"/>
    <property type="evidence" value="ECO:0007669"/>
    <property type="project" value="InterPro"/>
</dbReference>
<dbReference type="CDD" id="cd03216">
    <property type="entry name" value="ABC_Carb_Monos_I"/>
    <property type="match status" value="1"/>
</dbReference>
<dbReference type="CDD" id="cd03215">
    <property type="entry name" value="ABC_Carb_Monos_II"/>
    <property type="match status" value="1"/>
</dbReference>
<dbReference type="FunFam" id="3.40.50.300:FF:000126">
    <property type="entry name" value="Galactose/methyl galactoside import ATP-binding protein MglA"/>
    <property type="match status" value="1"/>
</dbReference>
<dbReference type="FunFam" id="3.40.50.300:FF:000127">
    <property type="entry name" value="Ribose import ATP-binding protein RbsA"/>
    <property type="match status" value="1"/>
</dbReference>
<dbReference type="Gene3D" id="3.40.50.300">
    <property type="entry name" value="P-loop containing nucleotide triphosphate hydrolases"/>
    <property type="match status" value="2"/>
</dbReference>
<dbReference type="InterPro" id="IPR003593">
    <property type="entry name" value="AAA+_ATPase"/>
</dbReference>
<dbReference type="InterPro" id="IPR050107">
    <property type="entry name" value="ABC_carbohydrate_import_ATPase"/>
</dbReference>
<dbReference type="InterPro" id="IPR003439">
    <property type="entry name" value="ABC_transporter-like_ATP-bd"/>
</dbReference>
<dbReference type="InterPro" id="IPR017871">
    <property type="entry name" value="ABC_transporter-like_CS"/>
</dbReference>
<dbReference type="InterPro" id="IPR027417">
    <property type="entry name" value="P-loop_NTPase"/>
</dbReference>
<dbReference type="NCBIfam" id="NF008030">
    <property type="entry name" value="PRK10762.1"/>
    <property type="match status" value="1"/>
</dbReference>
<dbReference type="PANTHER" id="PTHR43790">
    <property type="entry name" value="CARBOHYDRATE TRANSPORT ATP-BINDING PROTEIN MG119-RELATED"/>
    <property type="match status" value="1"/>
</dbReference>
<dbReference type="PANTHER" id="PTHR43790:SF3">
    <property type="entry name" value="D-ALLOSE IMPORT ATP-BINDING PROTEIN ALSA-RELATED"/>
    <property type="match status" value="1"/>
</dbReference>
<dbReference type="Pfam" id="PF00005">
    <property type="entry name" value="ABC_tran"/>
    <property type="match status" value="2"/>
</dbReference>
<dbReference type="SMART" id="SM00382">
    <property type="entry name" value="AAA"/>
    <property type="match status" value="2"/>
</dbReference>
<dbReference type="SUPFAM" id="SSF52540">
    <property type="entry name" value="P-loop containing nucleoside triphosphate hydrolases"/>
    <property type="match status" value="2"/>
</dbReference>
<dbReference type="PROSITE" id="PS00211">
    <property type="entry name" value="ABC_TRANSPORTER_1"/>
    <property type="match status" value="2"/>
</dbReference>
<dbReference type="PROSITE" id="PS50893">
    <property type="entry name" value="ABC_TRANSPORTER_2"/>
    <property type="match status" value="2"/>
</dbReference>
<dbReference type="PROSITE" id="PS51254">
    <property type="entry name" value="RBSA"/>
    <property type="match status" value="1"/>
</dbReference>
<organism>
    <name type="scientific">Vibrio cholerae serotype O1 (strain ATCC 39315 / El Tor Inaba N16961)</name>
    <dbReference type="NCBI Taxonomy" id="243277"/>
    <lineage>
        <taxon>Bacteria</taxon>
        <taxon>Pseudomonadati</taxon>
        <taxon>Pseudomonadota</taxon>
        <taxon>Gammaproteobacteria</taxon>
        <taxon>Vibrionales</taxon>
        <taxon>Vibrionaceae</taxon>
        <taxon>Vibrio</taxon>
    </lineage>
</organism>
<reference key="1">
    <citation type="journal article" date="2000" name="Nature">
        <title>DNA sequence of both chromosomes of the cholera pathogen Vibrio cholerae.</title>
        <authorList>
            <person name="Heidelberg J.F."/>
            <person name="Eisen J.A."/>
            <person name="Nelson W.C."/>
            <person name="Clayton R.A."/>
            <person name="Gwinn M.L."/>
            <person name="Dodson R.J."/>
            <person name="Haft D.H."/>
            <person name="Hickey E.K."/>
            <person name="Peterson J.D."/>
            <person name="Umayam L.A."/>
            <person name="Gill S.R."/>
            <person name="Nelson K.E."/>
            <person name="Read T.D."/>
            <person name="Tettelin H."/>
            <person name="Richardson D.L."/>
            <person name="Ermolaeva M.D."/>
            <person name="Vamathevan J.J."/>
            <person name="Bass S."/>
            <person name="Qin H."/>
            <person name="Dragoi I."/>
            <person name="Sellers P."/>
            <person name="McDonald L.A."/>
            <person name="Utterback T.R."/>
            <person name="Fleischmann R.D."/>
            <person name="Nierman W.C."/>
            <person name="White O."/>
            <person name="Salzberg S.L."/>
            <person name="Smith H.O."/>
            <person name="Colwell R.R."/>
            <person name="Mekalanos J.J."/>
            <person name="Venter J.C."/>
            <person name="Fraser C.M."/>
        </authorList>
    </citation>
    <scope>NUCLEOTIDE SEQUENCE [LARGE SCALE GENOMIC DNA]</scope>
    <source>
        <strain>ATCC 39315 / El Tor Inaba N16961</strain>
    </source>
</reference>
<protein>
    <recommendedName>
        <fullName evidence="1">Ribose import ATP-binding protein RbsA</fullName>
        <ecNumber evidence="1">7.5.2.7</ecNumber>
    </recommendedName>
</protein>
<evidence type="ECO:0000255" key="1">
    <source>
        <dbReference type="HAMAP-Rule" id="MF_01716"/>
    </source>
</evidence>
<name>RBSA_VIBCH</name>
<sequence length="500" mass="54408">MTQAILALSQIEKAFPGVKALDKASLNVYPGRVMALMGENGAGKSTLMKVLTGIYSKDAGSIEYQGQPVSFKGPRDSQLAGISIIHQELNLIPQLTIAENIFLGREMTSPFGRILWDEMHRKADQLLARLNVKHSAKTLLGELSLGEQQMVEIAKALSFESKVIIMDEPTDALTDTETESLFNVINELREQGCGIVYISHRLKEIFEICDDITVLRDGKFIGECRVCDTNEDGLIEMMVGRKLEEQYPRIAAQQGDISLEVIGLTGSGVHDVSFTLKKGEILGVSGLMGAGRTELMKVIYGALPSERGVINLNGRTVNPVSPQDGLANGIAYISEDRKGDGLVLGLSVKENMSLCALDQLSKGVQIRHADEVIAVDDFIRLFNIKTPSREQIIGNLSGGNQQKVAIAKGLMTKPKVLILDEPTRGVDVGAKKEIYQLINQFKAEGMSIILVSSEMPEVLGMSDRILVMHEGRISGEFMASEADQEKLMACAVGRNPAHAA</sequence>
<gene>
    <name evidence="1" type="primary">rbsA</name>
    <name type="ordered locus">VC_A0128</name>
</gene>
<feature type="chain" id="PRO_0000261115" description="Ribose import ATP-binding protein RbsA">
    <location>
        <begin position="1"/>
        <end position="500"/>
    </location>
</feature>
<feature type="domain" description="ABC transporter 1" evidence="1">
    <location>
        <begin position="6"/>
        <end position="242"/>
    </location>
</feature>
<feature type="domain" description="ABC transporter 2" evidence="1">
    <location>
        <begin position="252"/>
        <end position="495"/>
    </location>
</feature>
<feature type="binding site" evidence="1">
    <location>
        <begin position="38"/>
        <end position="45"/>
    </location>
    <ligand>
        <name>ATP</name>
        <dbReference type="ChEBI" id="CHEBI:30616"/>
    </ligand>
</feature>